<evidence type="ECO:0000255" key="1">
    <source>
        <dbReference type="HAMAP-Rule" id="MF_01451"/>
    </source>
</evidence>
<reference key="1">
    <citation type="journal article" date="2006" name="Proc. Natl. Acad. Sci. U.S.A.">
        <title>Comparative genomics of the lactic acid bacteria.</title>
        <authorList>
            <person name="Makarova K.S."/>
            <person name="Slesarev A."/>
            <person name="Wolf Y.I."/>
            <person name="Sorokin A."/>
            <person name="Mirkin B."/>
            <person name="Koonin E.V."/>
            <person name="Pavlov A."/>
            <person name="Pavlova N."/>
            <person name="Karamychev V."/>
            <person name="Polouchine N."/>
            <person name="Shakhova V."/>
            <person name="Grigoriev I."/>
            <person name="Lou Y."/>
            <person name="Rohksar D."/>
            <person name="Lucas S."/>
            <person name="Huang K."/>
            <person name="Goodstein D.M."/>
            <person name="Hawkins T."/>
            <person name="Plengvidhya V."/>
            <person name="Welker D."/>
            <person name="Hughes J."/>
            <person name="Goh Y."/>
            <person name="Benson A."/>
            <person name="Baldwin K."/>
            <person name="Lee J.-H."/>
            <person name="Diaz-Muniz I."/>
            <person name="Dosti B."/>
            <person name="Smeianov V."/>
            <person name="Wechter W."/>
            <person name="Barabote R."/>
            <person name="Lorca G."/>
            <person name="Altermann E."/>
            <person name="Barrangou R."/>
            <person name="Ganesan B."/>
            <person name="Xie Y."/>
            <person name="Rawsthorne H."/>
            <person name="Tamir D."/>
            <person name="Parker C."/>
            <person name="Breidt F."/>
            <person name="Broadbent J.R."/>
            <person name="Hutkins R."/>
            <person name="O'Sullivan D."/>
            <person name="Steele J."/>
            <person name="Unlu G."/>
            <person name="Saier M.H. Jr."/>
            <person name="Klaenhammer T."/>
            <person name="Richardson P."/>
            <person name="Kozyavkin S."/>
            <person name="Weimer B.C."/>
            <person name="Mills D.A."/>
        </authorList>
    </citation>
    <scope>NUCLEOTIDE SEQUENCE [LARGE SCALE GENOMIC DNA]</scope>
    <source>
        <strain>ATCC BAA-491 / LMD-9</strain>
    </source>
</reference>
<name>ADDA_STRTD</name>
<keyword id="KW-0067">ATP-binding</keyword>
<keyword id="KW-0227">DNA damage</keyword>
<keyword id="KW-0234">DNA repair</keyword>
<keyword id="KW-0238">DNA-binding</keyword>
<keyword id="KW-0269">Exonuclease</keyword>
<keyword id="KW-0347">Helicase</keyword>
<keyword id="KW-0378">Hydrolase</keyword>
<keyword id="KW-0413">Isomerase</keyword>
<keyword id="KW-0540">Nuclease</keyword>
<keyword id="KW-0547">Nucleotide-binding</keyword>
<comment type="function">
    <text evidence="1">The heterodimer acts as both an ATP-dependent DNA helicase and an ATP-dependent, dual-direction single-stranded exonuclease. Recognizes the chi site generating a DNA molecule suitable for the initiation of homologous recombination. The AddA nuclease domain is required for chi fragment generation; this subunit has the helicase and 3' -&gt; 5' nuclease activities.</text>
</comment>
<comment type="catalytic activity">
    <reaction evidence="1">
        <text>Couples ATP hydrolysis with the unwinding of duplex DNA by translocating in the 3'-5' direction.</text>
        <dbReference type="EC" id="5.6.2.4"/>
    </reaction>
</comment>
<comment type="catalytic activity">
    <reaction evidence="1">
        <text>ATP + H2O = ADP + phosphate + H(+)</text>
        <dbReference type="Rhea" id="RHEA:13065"/>
        <dbReference type="ChEBI" id="CHEBI:15377"/>
        <dbReference type="ChEBI" id="CHEBI:15378"/>
        <dbReference type="ChEBI" id="CHEBI:30616"/>
        <dbReference type="ChEBI" id="CHEBI:43474"/>
        <dbReference type="ChEBI" id="CHEBI:456216"/>
        <dbReference type="EC" id="5.6.2.4"/>
    </reaction>
</comment>
<comment type="cofactor">
    <cofactor evidence="1">
        <name>Mg(2+)</name>
        <dbReference type="ChEBI" id="CHEBI:18420"/>
    </cofactor>
</comment>
<comment type="subunit">
    <text evidence="1">Heterodimer of AddA and AddB/RexB.</text>
</comment>
<comment type="similarity">
    <text evidence="1">Belongs to the helicase family. AddA subfamily.</text>
</comment>
<dbReference type="EC" id="3.1.-.-" evidence="1"/>
<dbReference type="EC" id="5.6.2.4" evidence="1"/>
<dbReference type="EMBL" id="CP000419">
    <property type="protein sequence ID" value="ABJ66824.1"/>
    <property type="molecule type" value="Genomic_DNA"/>
</dbReference>
<dbReference type="RefSeq" id="WP_011681595.1">
    <property type="nucleotide sequence ID" value="NC_008532.1"/>
</dbReference>
<dbReference type="SMR" id="Q03IZ8"/>
<dbReference type="KEGG" id="ste:STER_1681"/>
<dbReference type="HOGENOM" id="CLU_001114_3_1_9"/>
<dbReference type="GO" id="GO:0005829">
    <property type="term" value="C:cytosol"/>
    <property type="evidence" value="ECO:0007669"/>
    <property type="project" value="TreeGrafter"/>
</dbReference>
<dbReference type="GO" id="GO:0033202">
    <property type="term" value="C:DNA helicase complex"/>
    <property type="evidence" value="ECO:0007669"/>
    <property type="project" value="TreeGrafter"/>
</dbReference>
<dbReference type="GO" id="GO:0043138">
    <property type="term" value="F:3'-5' DNA helicase activity"/>
    <property type="evidence" value="ECO:0007669"/>
    <property type="project" value="UniProtKB-UniRule"/>
</dbReference>
<dbReference type="GO" id="GO:0008408">
    <property type="term" value="F:3'-5' exonuclease activity"/>
    <property type="evidence" value="ECO:0007669"/>
    <property type="project" value="UniProtKB-UniRule"/>
</dbReference>
<dbReference type="GO" id="GO:0005524">
    <property type="term" value="F:ATP binding"/>
    <property type="evidence" value="ECO:0007669"/>
    <property type="project" value="UniProtKB-UniRule"/>
</dbReference>
<dbReference type="GO" id="GO:0016887">
    <property type="term" value="F:ATP hydrolysis activity"/>
    <property type="evidence" value="ECO:0007669"/>
    <property type="project" value="RHEA"/>
</dbReference>
<dbReference type="GO" id="GO:0003690">
    <property type="term" value="F:double-stranded DNA binding"/>
    <property type="evidence" value="ECO:0007669"/>
    <property type="project" value="UniProtKB-UniRule"/>
</dbReference>
<dbReference type="GO" id="GO:0000724">
    <property type="term" value="P:double-strand break repair via homologous recombination"/>
    <property type="evidence" value="ECO:0007669"/>
    <property type="project" value="UniProtKB-UniRule"/>
</dbReference>
<dbReference type="CDD" id="cd17932">
    <property type="entry name" value="DEXQc_UvrD"/>
    <property type="match status" value="1"/>
</dbReference>
<dbReference type="Gene3D" id="3.90.320.10">
    <property type="match status" value="1"/>
</dbReference>
<dbReference type="Gene3D" id="3.40.50.300">
    <property type="entry name" value="P-loop containing nucleotide triphosphate hydrolases"/>
    <property type="match status" value="4"/>
</dbReference>
<dbReference type="Gene3D" id="1.10.486.10">
    <property type="entry name" value="PCRA, domain 4"/>
    <property type="match status" value="1"/>
</dbReference>
<dbReference type="HAMAP" id="MF_01451">
    <property type="entry name" value="AddA"/>
    <property type="match status" value="1"/>
</dbReference>
<dbReference type="InterPro" id="IPR014152">
    <property type="entry name" value="AddA"/>
</dbReference>
<dbReference type="InterPro" id="IPR014017">
    <property type="entry name" value="DNA_helicase_UvrD-like_C"/>
</dbReference>
<dbReference type="InterPro" id="IPR000212">
    <property type="entry name" value="DNA_helicase_UvrD/REP"/>
</dbReference>
<dbReference type="InterPro" id="IPR027417">
    <property type="entry name" value="P-loop_NTPase"/>
</dbReference>
<dbReference type="InterPro" id="IPR011604">
    <property type="entry name" value="PDDEXK-like_dom_sf"/>
</dbReference>
<dbReference type="InterPro" id="IPR038726">
    <property type="entry name" value="PDDEXK_AddAB-type"/>
</dbReference>
<dbReference type="InterPro" id="IPR011335">
    <property type="entry name" value="Restrct_endonuc-II-like"/>
</dbReference>
<dbReference type="InterPro" id="IPR014016">
    <property type="entry name" value="UvrD-like_ATP-bd"/>
</dbReference>
<dbReference type="NCBIfam" id="TIGR02785">
    <property type="entry name" value="addA_Gpos"/>
    <property type="match status" value="1"/>
</dbReference>
<dbReference type="PANTHER" id="PTHR11070:SF48">
    <property type="entry name" value="ATP-DEPENDENT HELICASE_NUCLEASE SUBUNIT A"/>
    <property type="match status" value="1"/>
</dbReference>
<dbReference type="PANTHER" id="PTHR11070">
    <property type="entry name" value="UVRD / RECB / PCRA DNA HELICASE FAMILY MEMBER"/>
    <property type="match status" value="1"/>
</dbReference>
<dbReference type="Pfam" id="PF12705">
    <property type="entry name" value="PDDEXK_1"/>
    <property type="match status" value="1"/>
</dbReference>
<dbReference type="Pfam" id="PF00580">
    <property type="entry name" value="UvrD-helicase"/>
    <property type="match status" value="2"/>
</dbReference>
<dbReference type="Pfam" id="PF13361">
    <property type="entry name" value="UvrD_C"/>
    <property type="match status" value="1"/>
</dbReference>
<dbReference type="SUPFAM" id="SSF52540">
    <property type="entry name" value="P-loop containing nucleoside triphosphate hydrolases"/>
    <property type="match status" value="1"/>
</dbReference>
<dbReference type="SUPFAM" id="SSF52980">
    <property type="entry name" value="Restriction endonuclease-like"/>
    <property type="match status" value="1"/>
</dbReference>
<dbReference type="PROSITE" id="PS51198">
    <property type="entry name" value="UVRD_HELICASE_ATP_BIND"/>
    <property type="match status" value="1"/>
</dbReference>
<dbReference type="PROSITE" id="PS51217">
    <property type="entry name" value="UVRD_HELICASE_CTER"/>
    <property type="match status" value="1"/>
</dbReference>
<proteinExistence type="inferred from homology"/>
<feature type="chain" id="PRO_0000379355" description="ATP-dependent helicase/nuclease subunit A">
    <location>
        <begin position="1"/>
        <end position="1217"/>
    </location>
</feature>
<feature type="domain" description="UvrD-like helicase ATP-binding" evidence="1">
    <location>
        <begin position="26"/>
        <end position="487"/>
    </location>
</feature>
<feature type="domain" description="UvrD-like helicase C-terminal" evidence="1">
    <location>
        <begin position="515"/>
        <end position="799"/>
    </location>
</feature>
<feature type="binding site" evidence="1">
    <location>
        <begin position="47"/>
        <end position="54"/>
    </location>
    <ligand>
        <name>ATP</name>
        <dbReference type="ChEBI" id="CHEBI:30616"/>
    </ligand>
</feature>
<protein>
    <recommendedName>
        <fullName evidence="1">ATP-dependent helicase/nuclease subunit A</fullName>
        <ecNumber evidence="1">3.1.-.-</ecNumber>
        <ecNumber evidence="1">5.6.2.4</ecNumber>
    </recommendedName>
    <alternativeName>
        <fullName evidence="1">ATP-dependent helicase/nuclease AddA</fullName>
    </alternativeName>
    <alternativeName>
        <fullName evidence="1">DNA 3'-5' helicase AddA</fullName>
    </alternativeName>
</protein>
<accession>Q03IZ8</accession>
<gene>
    <name evidence="1" type="primary">addA</name>
    <name type="ordered locus">STER_1681</name>
</gene>
<sequence>MLTKAFLSPAEIEERIAQEAASDKDRKLTPEQIEAIYSNGTNILVSASAGSGKTFVMVERILDMIGRGVGIDQLFISTFTVKAAGELKERLEKRLTKHLGQAETDEERAFLSDQIAKIGTADIGTMDAFTQKLVNQYGYLLGVSPTFRIMTDLAEQTLMKNEVYADLFNDYMQGKDAQLFQKLVRNFTGHSKTSKAFRDLVYDIYSFSQATADPEKWLRQNLLKGQIEAKPEQAKNELLDSLKDGLLADFLAFLRDHLGIAQREFAKAKYLNNVSDAIILLEGSLINDQTDMEDLLKQLLTLSGGTGLTNMTRPKDEELKAYKEAYNKTKNEFVAQLREVDTQLTVLEVLAKHNDDILPMLELLQSFVLDFSDQYLQAKIQENTFEFSDIAHFAIRILEENPEVAVSYRDRYHEVMVDEYQDNSHTQERMLELLSNGHNRFMVGDIKQSIYRFRQADPQIFNDKFQLFLENPDAGKLILLKENFRSQSEVLDATNGVFSHLMDQEIGDILYDKTHMLVAGSQKQKEPHPENETEVLIYNSDESSTSEDEEGPDQAISSGEISLVIKEIIKLHEQGVRFEDITLLAPNRNTYLDLMVSFEEHGIPLVPDEYKSSYLESLEVMIMLDTLRAINNPLNDYALVALLRSPMFNFNEDDLTRIAVQADKGQFYDKLLAAHTKSGLHPEVVMQGLDAKLTLFTETLADWRDYSKCHSIYDLIWKIYNDRFYYDYVGGLPRAEQRQANLYALALRANAYEKTGFKGLSRFIGMIDKIIASGNDLEEVTDLVPKNAVSLMTIHKSKGLEFKYVFVLQMNRKFIGHSKDGLSGKYIINREKGLGIKYLADLKDQINTNLPKLNVVLETLTFQENRREERRASISEEMRLLYVAMTRAEKKLYLVGKGSKETLTQQYGTNVENNRLPVAIRDQIATYQDWIMALDTAFMRKDLKFTVRFVEAEELTPEAIGQVEVQAAVDADDLSNNRQTEDIKRALTVLESVEKLNQLYAPAIDLPSVRTPSQLKTLYEPIMDTEGVDIMDKKEGVQPLETASTFELPDFGQKTKVTGAAVGSATHELMQRLILSDKVTLQDLTQALSRVSADDQVKARVQLEKLLGFFDTELGKLILANRGKLRREAPFAMLAEDPASKEDFVVRGIIDGYLLLEDRIVLFDYKTDHFTHPSELKTRYQGQMSLYAKALSQAYQMEKVDKYLILLGGKDLEVVEV</sequence>
<organism>
    <name type="scientific">Streptococcus thermophilus (strain ATCC BAA-491 / LMD-9)</name>
    <dbReference type="NCBI Taxonomy" id="322159"/>
    <lineage>
        <taxon>Bacteria</taxon>
        <taxon>Bacillati</taxon>
        <taxon>Bacillota</taxon>
        <taxon>Bacilli</taxon>
        <taxon>Lactobacillales</taxon>
        <taxon>Streptococcaceae</taxon>
        <taxon>Streptococcus</taxon>
    </lineage>
</organism>